<evidence type="ECO:0000255" key="1">
    <source>
        <dbReference type="HAMAP-Rule" id="MF_01186"/>
    </source>
</evidence>
<evidence type="ECO:0000256" key="2">
    <source>
        <dbReference type="SAM" id="MobiDB-lite"/>
    </source>
</evidence>
<organism>
    <name type="scientific">Shigella sonnei (strain Ss046)</name>
    <dbReference type="NCBI Taxonomy" id="300269"/>
    <lineage>
        <taxon>Bacteria</taxon>
        <taxon>Pseudomonadati</taxon>
        <taxon>Pseudomonadota</taxon>
        <taxon>Gammaproteobacteria</taxon>
        <taxon>Enterobacterales</taxon>
        <taxon>Enterobacteriaceae</taxon>
        <taxon>Shigella</taxon>
    </lineage>
</organism>
<dbReference type="EMBL" id="CP000038">
    <property type="protein sequence ID" value="AAZ87361.1"/>
    <property type="molecule type" value="Genomic_DNA"/>
</dbReference>
<dbReference type="RefSeq" id="WP_001269673.1">
    <property type="nucleotide sequence ID" value="NC_007384.1"/>
</dbReference>
<dbReference type="SMR" id="Q3Z4F1"/>
<dbReference type="GeneID" id="93776841"/>
<dbReference type="KEGG" id="ssn:SSON_0595"/>
<dbReference type="HOGENOM" id="CLU_103309_1_1_6"/>
<dbReference type="Proteomes" id="UP000002529">
    <property type="component" value="Chromosome"/>
</dbReference>
<dbReference type="GO" id="GO:0009279">
    <property type="term" value="C:cell outer membrane"/>
    <property type="evidence" value="ECO:0007669"/>
    <property type="project" value="UniProtKB-SubCell"/>
</dbReference>
<dbReference type="GO" id="GO:1990351">
    <property type="term" value="C:transporter complex"/>
    <property type="evidence" value="ECO:0007669"/>
    <property type="project" value="TreeGrafter"/>
</dbReference>
<dbReference type="GO" id="GO:0001530">
    <property type="term" value="F:lipopolysaccharide binding"/>
    <property type="evidence" value="ECO:0007669"/>
    <property type="project" value="TreeGrafter"/>
</dbReference>
<dbReference type="GO" id="GO:0043165">
    <property type="term" value="P:Gram-negative-bacterium-type cell outer membrane assembly"/>
    <property type="evidence" value="ECO:0007669"/>
    <property type="project" value="UniProtKB-UniRule"/>
</dbReference>
<dbReference type="GO" id="GO:0015920">
    <property type="term" value="P:lipopolysaccharide transport"/>
    <property type="evidence" value="ECO:0007669"/>
    <property type="project" value="TreeGrafter"/>
</dbReference>
<dbReference type="FunFam" id="3.30.160.150:FF:000001">
    <property type="entry name" value="LPS-assembly lipoprotein LptE"/>
    <property type="match status" value="1"/>
</dbReference>
<dbReference type="Gene3D" id="3.30.160.150">
    <property type="entry name" value="Lipoprotein like domain"/>
    <property type="match status" value="1"/>
</dbReference>
<dbReference type="HAMAP" id="MF_01186">
    <property type="entry name" value="LPS_assembly_LptE"/>
    <property type="match status" value="1"/>
</dbReference>
<dbReference type="InterPro" id="IPR007485">
    <property type="entry name" value="LPS_assembly_LptE"/>
</dbReference>
<dbReference type="NCBIfam" id="NF008062">
    <property type="entry name" value="PRK10796.1"/>
    <property type="match status" value="1"/>
</dbReference>
<dbReference type="PANTHER" id="PTHR38098">
    <property type="entry name" value="LPS-ASSEMBLY LIPOPROTEIN LPTE"/>
    <property type="match status" value="1"/>
</dbReference>
<dbReference type="PANTHER" id="PTHR38098:SF1">
    <property type="entry name" value="LPS-ASSEMBLY LIPOPROTEIN LPTE"/>
    <property type="match status" value="1"/>
</dbReference>
<dbReference type="Pfam" id="PF04390">
    <property type="entry name" value="LptE"/>
    <property type="match status" value="1"/>
</dbReference>
<dbReference type="PROSITE" id="PS51257">
    <property type="entry name" value="PROKAR_LIPOPROTEIN"/>
    <property type="match status" value="1"/>
</dbReference>
<reference key="1">
    <citation type="journal article" date="2005" name="Nucleic Acids Res.">
        <title>Genome dynamics and diversity of Shigella species, the etiologic agents of bacillary dysentery.</title>
        <authorList>
            <person name="Yang F."/>
            <person name="Yang J."/>
            <person name="Zhang X."/>
            <person name="Chen L."/>
            <person name="Jiang Y."/>
            <person name="Yan Y."/>
            <person name="Tang X."/>
            <person name="Wang J."/>
            <person name="Xiong Z."/>
            <person name="Dong J."/>
            <person name="Xue Y."/>
            <person name="Zhu Y."/>
            <person name="Xu X."/>
            <person name="Sun L."/>
            <person name="Chen S."/>
            <person name="Nie H."/>
            <person name="Peng J."/>
            <person name="Xu J."/>
            <person name="Wang Y."/>
            <person name="Yuan Z."/>
            <person name="Wen Y."/>
            <person name="Yao Z."/>
            <person name="Shen Y."/>
            <person name="Qiang B."/>
            <person name="Hou Y."/>
            <person name="Yu J."/>
            <person name="Jin Q."/>
        </authorList>
    </citation>
    <scope>NUCLEOTIDE SEQUENCE [LARGE SCALE GENOMIC DNA]</scope>
    <source>
        <strain>Ss046</strain>
    </source>
</reference>
<proteinExistence type="inferred from homology"/>
<sequence>MRYLATLLLSLAVLITAGCGWHLRDTTQVPSTMKVMILDSGDPNGPLSRAVRNQLRLNGVELLDKETTRKDVPSLRLGKVSIAKDTASVFRNGQTAEYQMIMTVNATVLIPGRDIYPISAKVFRSFFDNPQMALAKDNEQDMIVKEMYDRAAEQLIRKLPSIRAADIRSDEEQTSTTTDTPATPARVSTTLGN</sequence>
<protein>
    <recommendedName>
        <fullName evidence="1">LPS-assembly lipoprotein LptE</fullName>
    </recommendedName>
</protein>
<gene>
    <name evidence="1" type="primary">lptE</name>
    <name type="synonym">rlpB</name>
    <name type="ordered locus">SSON_0595</name>
</gene>
<comment type="function">
    <text evidence="1">Together with LptD, is involved in the assembly of lipopolysaccharide (LPS) at the surface of the outer membrane. Required for the proper assembly of LptD. Binds LPS and may serve as the LPS recognition site at the outer membrane.</text>
</comment>
<comment type="subunit">
    <text evidence="1">Component of the lipopolysaccharide transport and assembly complex. Interacts with LptD.</text>
</comment>
<comment type="subcellular location">
    <subcellularLocation>
        <location evidence="1">Cell outer membrane</location>
        <topology evidence="1">Lipid-anchor</topology>
    </subcellularLocation>
</comment>
<comment type="similarity">
    <text evidence="1">Belongs to the LptE lipoprotein family.</text>
</comment>
<name>LPTE_SHISS</name>
<accession>Q3Z4F1</accession>
<keyword id="KW-0998">Cell outer membrane</keyword>
<keyword id="KW-0449">Lipoprotein</keyword>
<keyword id="KW-0472">Membrane</keyword>
<keyword id="KW-0564">Palmitate</keyword>
<keyword id="KW-1185">Reference proteome</keyword>
<keyword id="KW-0732">Signal</keyword>
<feature type="signal peptide" evidence="1">
    <location>
        <begin position="1"/>
        <end position="18"/>
    </location>
</feature>
<feature type="chain" id="PRO_0000281189" description="LPS-assembly lipoprotein LptE">
    <location>
        <begin position="19"/>
        <end position="193"/>
    </location>
</feature>
<feature type="region of interest" description="Disordered" evidence="2">
    <location>
        <begin position="166"/>
        <end position="193"/>
    </location>
</feature>
<feature type="compositionally biased region" description="Low complexity" evidence="2">
    <location>
        <begin position="174"/>
        <end position="186"/>
    </location>
</feature>
<feature type="lipid moiety-binding region" description="N-palmitoyl cysteine" evidence="1">
    <location>
        <position position="19"/>
    </location>
</feature>
<feature type="lipid moiety-binding region" description="S-diacylglycerol cysteine" evidence="1">
    <location>
        <position position="19"/>
    </location>
</feature>